<reference key="1">
    <citation type="journal article" date="1983" name="Nature">
        <title>Human beta-nerve growth factor gene sequence highly homologous to that of mouse.</title>
        <authorList>
            <person name="Ullrich A."/>
            <person name="Gray A."/>
            <person name="Berman C."/>
            <person name="Dull T.J."/>
        </authorList>
    </citation>
    <scope>NUCLEOTIDE SEQUENCE [GENOMIC DNA]</scope>
    <scope>VARIANT VAL-35</scope>
</reference>
<reference key="2">
    <citation type="journal article" date="1983" name="Cold Spring Harb. Symp. Quant. Biol.">
        <title>Sequence homology of human and mouse beta-NGF subunit genes.</title>
        <authorList>
            <person name="Ullrich A."/>
            <person name="Gray A."/>
            <person name="Berman C."/>
            <person name="Coussens L."/>
            <person name="Dull T.J."/>
        </authorList>
    </citation>
    <scope>NUCLEOTIDE SEQUENCE [GENOMIC DNA]</scope>
    <scope>VARIANT VAL-35</scope>
</reference>
<reference key="3">
    <citation type="journal article" date="1990" name="Nucleic Acids Res.">
        <title>cDNA sequence of human beta-NGF.</title>
        <authorList>
            <person name="Borsani G."/>
            <person name="Pizzuti A."/>
            <person name="Rugarli E.I."/>
            <person name="Falini A."/>
            <person name="Silani V."/>
            <person name="Sidoli A."/>
            <person name="Scarlato G."/>
            <person name="Barelle F.E."/>
        </authorList>
    </citation>
    <scope>NUCLEOTIDE SEQUENCE [MRNA]</scope>
    <scope>VARIANT VAL-35</scope>
    <source>
        <tissue>Brain</tissue>
    </source>
</reference>
<reference key="4">
    <citation type="journal article" date="1997" name="Zhongguo Ying Yong Sheng Li Xue Za Zhi">
        <title>Cloning and sequencing of the gene for premature beta nerve growth factor.</title>
        <authorList>
            <person name="Tong Y."/>
            <person name="Wang H."/>
            <person name="Chen W."/>
        </authorList>
    </citation>
    <scope>NUCLEOTIDE SEQUENCE [GENOMIC DNA]</scope>
</reference>
<reference key="5">
    <citation type="journal article" date="2004" name="Mol. Biol. Evol.">
        <title>Human-specific amino acid changes found in 103 protein-coding genes.</title>
        <authorList>
            <person name="Kitano T."/>
            <person name="Liu Y.-H."/>
            <person name="Ueda S."/>
            <person name="Saitou N."/>
        </authorList>
    </citation>
    <scope>NUCLEOTIDE SEQUENCE [GENOMIC DNA]</scope>
    <scope>VARIANT VAL-35</scope>
</reference>
<reference key="6">
    <citation type="submission" date="2001-08" db="EMBL/GenBank/DDBJ databases">
        <authorList>
            <person name="Zhang Y."/>
            <person name="Zhang B."/>
            <person name="Zhou Y."/>
            <person name="Peng X."/>
            <person name="Yuan J."/>
            <person name="Qiang B."/>
        </authorList>
    </citation>
    <scope>NUCLEOTIDE SEQUENCE [MRNA]</scope>
</reference>
<reference key="7">
    <citation type="submission" date="2004-06" db="EMBL/GenBank/DDBJ databases">
        <title>Cloning of human full open reading frames in Gateway(TM) system entry vector (pDONR201).</title>
        <authorList>
            <person name="Halleck A."/>
            <person name="Ebert L."/>
            <person name="Mkoundinya M."/>
            <person name="Schick M."/>
            <person name="Eisenstein S."/>
            <person name="Neubert P."/>
            <person name="Kstrang K."/>
            <person name="Schatten R."/>
            <person name="Shen B."/>
            <person name="Henze S."/>
            <person name="Mar W."/>
            <person name="Korn B."/>
            <person name="Zuo D."/>
            <person name="Hu Y."/>
            <person name="LaBaer J."/>
        </authorList>
    </citation>
    <scope>NUCLEOTIDE SEQUENCE [LARGE SCALE MRNA]</scope>
</reference>
<reference key="8">
    <citation type="submission" date="2004-10" db="EMBL/GenBank/DDBJ databases">
        <title>Cloning of human full-length CDSs in BD Creator(TM) system donor vector.</title>
        <authorList>
            <person name="Kalnine N."/>
            <person name="Chen X."/>
            <person name="Rolfs A."/>
            <person name="Halleck A."/>
            <person name="Hines L."/>
            <person name="Eisenstein S."/>
            <person name="Koundinya M."/>
            <person name="Raphael J."/>
            <person name="Moreira D."/>
            <person name="Kelley T."/>
            <person name="LaBaer J."/>
            <person name="Lin Y."/>
            <person name="Phelan M."/>
            <person name="Farmer A."/>
        </authorList>
    </citation>
    <scope>NUCLEOTIDE SEQUENCE [LARGE SCALE MRNA]</scope>
</reference>
<reference key="9">
    <citation type="journal article" date="2006" name="Nature">
        <title>The DNA sequence and biological annotation of human chromosome 1.</title>
        <authorList>
            <person name="Gregory S.G."/>
            <person name="Barlow K.F."/>
            <person name="McLay K.E."/>
            <person name="Kaul R."/>
            <person name="Swarbreck D."/>
            <person name="Dunham A."/>
            <person name="Scott C.E."/>
            <person name="Howe K.L."/>
            <person name="Woodfine K."/>
            <person name="Spencer C.C.A."/>
            <person name="Jones M.C."/>
            <person name="Gillson C."/>
            <person name="Searle S."/>
            <person name="Zhou Y."/>
            <person name="Kokocinski F."/>
            <person name="McDonald L."/>
            <person name="Evans R."/>
            <person name="Phillips K."/>
            <person name="Atkinson A."/>
            <person name="Cooper R."/>
            <person name="Jones C."/>
            <person name="Hall R.E."/>
            <person name="Andrews T.D."/>
            <person name="Lloyd C."/>
            <person name="Ainscough R."/>
            <person name="Almeida J.P."/>
            <person name="Ambrose K.D."/>
            <person name="Anderson F."/>
            <person name="Andrew R.W."/>
            <person name="Ashwell R.I.S."/>
            <person name="Aubin K."/>
            <person name="Babbage A.K."/>
            <person name="Bagguley C.L."/>
            <person name="Bailey J."/>
            <person name="Beasley H."/>
            <person name="Bethel G."/>
            <person name="Bird C.P."/>
            <person name="Bray-Allen S."/>
            <person name="Brown J.Y."/>
            <person name="Brown A.J."/>
            <person name="Buckley D."/>
            <person name="Burton J."/>
            <person name="Bye J."/>
            <person name="Carder C."/>
            <person name="Chapman J.C."/>
            <person name="Clark S.Y."/>
            <person name="Clarke G."/>
            <person name="Clee C."/>
            <person name="Cobley V."/>
            <person name="Collier R.E."/>
            <person name="Corby N."/>
            <person name="Coville G.J."/>
            <person name="Davies J."/>
            <person name="Deadman R."/>
            <person name="Dunn M."/>
            <person name="Earthrowl M."/>
            <person name="Ellington A.G."/>
            <person name="Errington H."/>
            <person name="Frankish A."/>
            <person name="Frankland J."/>
            <person name="French L."/>
            <person name="Garner P."/>
            <person name="Garnett J."/>
            <person name="Gay L."/>
            <person name="Ghori M.R.J."/>
            <person name="Gibson R."/>
            <person name="Gilby L.M."/>
            <person name="Gillett W."/>
            <person name="Glithero R.J."/>
            <person name="Grafham D.V."/>
            <person name="Griffiths C."/>
            <person name="Griffiths-Jones S."/>
            <person name="Grocock R."/>
            <person name="Hammond S."/>
            <person name="Harrison E.S.I."/>
            <person name="Hart E."/>
            <person name="Haugen E."/>
            <person name="Heath P.D."/>
            <person name="Holmes S."/>
            <person name="Holt K."/>
            <person name="Howden P.J."/>
            <person name="Hunt A.R."/>
            <person name="Hunt S.E."/>
            <person name="Hunter G."/>
            <person name="Isherwood J."/>
            <person name="James R."/>
            <person name="Johnson C."/>
            <person name="Johnson D."/>
            <person name="Joy A."/>
            <person name="Kay M."/>
            <person name="Kershaw J.K."/>
            <person name="Kibukawa M."/>
            <person name="Kimberley A.M."/>
            <person name="King A."/>
            <person name="Knights A.J."/>
            <person name="Lad H."/>
            <person name="Laird G."/>
            <person name="Lawlor S."/>
            <person name="Leongamornlert D.A."/>
            <person name="Lloyd D.M."/>
            <person name="Loveland J."/>
            <person name="Lovell J."/>
            <person name="Lush M.J."/>
            <person name="Lyne R."/>
            <person name="Martin S."/>
            <person name="Mashreghi-Mohammadi M."/>
            <person name="Matthews L."/>
            <person name="Matthews N.S.W."/>
            <person name="McLaren S."/>
            <person name="Milne S."/>
            <person name="Mistry S."/>
            <person name="Moore M.J.F."/>
            <person name="Nickerson T."/>
            <person name="O'Dell C.N."/>
            <person name="Oliver K."/>
            <person name="Palmeiri A."/>
            <person name="Palmer S.A."/>
            <person name="Parker A."/>
            <person name="Patel D."/>
            <person name="Pearce A.V."/>
            <person name="Peck A.I."/>
            <person name="Pelan S."/>
            <person name="Phelps K."/>
            <person name="Phillimore B.J."/>
            <person name="Plumb R."/>
            <person name="Rajan J."/>
            <person name="Raymond C."/>
            <person name="Rouse G."/>
            <person name="Saenphimmachak C."/>
            <person name="Sehra H.K."/>
            <person name="Sheridan E."/>
            <person name="Shownkeen R."/>
            <person name="Sims S."/>
            <person name="Skuce C.D."/>
            <person name="Smith M."/>
            <person name="Steward C."/>
            <person name="Subramanian S."/>
            <person name="Sycamore N."/>
            <person name="Tracey A."/>
            <person name="Tromans A."/>
            <person name="Van Helmond Z."/>
            <person name="Wall M."/>
            <person name="Wallis J.M."/>
            <person name="White S."/>
            <person name="Whitehead S.L."/>
            <person name="Wilkinson J.E."/>
            <person name="Willey D.L."/>
            <person name="Williams H."/>
            <person name="Wilming L."/>
            <person name="Wray P.W."/>
            <person name="Wu Z."/>
            <person name="Coulson A."/>
            <person name="Vaudin M."/>
            <person name="Sulston J.E."/>
            <person name="Durbin R.M."/>
            <person name="Hubbard T."/>
            <person name="Wooster R."/>
            <person name="Dunham I."/>
            <person name="Carter N.P."/>
            <person name="McVean G."/>
            <person name="Ross M.T."/>
            <person name="Harrow J."/>
            <person name="Olson M.V."/>
            <person name="Beck S."/>
            <person name="Rogers J."/>
            <person name="Bentley D.R."/>
        </authorList>
    </citation>
    <scope>NUCLEOTIDE SEQUENCE [LARGE SCALE GENOMIC DNA]</scope>
</reference>
<reference key="10">
    <citation type="submission" date="2005-07" db="EMBL/GenBank/DDBJ databases">
        <authorList>
            <person name="Mural R.J."/>
            <person name="Istrail S."/>
            <person name="Sutton G.G."/>
            <person name="Florea L."/>
            <person name="Halpern A.L."/>
            <person name="Mobarry C.M."/>
            <person name="Lippert R."/>
            <person name="Walenz B."/>
            <person name="Shatkay H."/>
            <person name="Dew I."/>
            <person name="Miller J.R."/>
            <person name="Flanigan M.J."/>
            <person name="Edwards N.J."/>
            <person name="Bolanos R."/>
            <person name="Fasulo D."/>
            <person name="Halldorsson B.V."/>
            <person name="Hannenhalli S."/>
            <person name="Turner R."/>
            <person name="Yooseph S."/>
            <person name="Lu F."/>
            <person name="Nusskern D.R."/>
            <person name="Shue B.C."/>
            <person name="Zheng X.H."/>
            <person name="Zhong F."/>
            <person name="Delcher A.L."/>
            <person name="Huson D.H."/>
            <person name="Kravitz S.A."/>
            <person name="Mouchard L."/>
            <person name="Reinert K."/>
            <person name="Remington K.A."/>
            <person name="Clark A.G."/>
            <person name="Waterman M.S."/>
            <person name="Eichler E.E."/>
            <person name="Adams M.D."/>
            <person name="Hunkapiller M.W."/>
            <person name="Myers E.W."/>
            <person name="Venter J.C."/>
        </authorList>
    </citation>
    <scope>NUCLEOTIDE SEQUENCE [LARGE SCALE GENOMIC DNA]</scope>
    <scope>VARIANT VAL-35</scope>
</reference>
<reference key="11">
    <citation type="journal article" date="2004" name="Genome Res.">
        <title>The status, quality, and expansion of the NIH full-length cDNA project: the Mammalian Gene Collection (MGC).</title>
        <authorList>
            <consortium name="The MGC Project Team"/>
        </authorList>
    </citation>
    <scope>NUCLEOTIDE SEQUENCE [LARGE SCALE MRNA]</scope>
    <scope>VARIANT VAL-35</scope>
    <source>
        <tissue>Eye</tissue>
    </source>
</reference>
<reference key="12">
    <citation type="journal article" date="1991" name="Neuron">
        <title>Evolutionary studies of the nerve growth factor family reveal a novel member abundantly expressed in Xenopus ovary.</title>
        <authorList>
            <person name="Hallboeoek F."/>
            <person name="Ibanez C.F."/>
            <person name="Persson H."/>
        </authorList>
    </citation>
    <scope>NUCLEOTIDE SEQUENCE [MRNA] OF 178-219</scope>
    <source>
        <tissue>Leukocyte</tissue>
    </source>
</reference>
<reference key="13">
    <citation type="journal article" date="1991" name="Cell">
        <title>The trk proto-oncogene encodes a receptor for nerve growth factor.</title>
        <authorList>
            <person name="Klein R."/>
            <person name="Jing S."/>
            <person name="Nanduri V."/>
            <person name="O'Rourke E."/>
            <person name="Barbacid M."/>
        </authorList>
    </citation>
    <scope>IDENTIFICATION OF NTRK1 AS THE HIGH AFFINITY NGF RECEPTOR</scope>
</reference>
<reference key="14">
    <citation type="journal article" date="2005" name="FEBS Lett.">
        <title>SorCS3 does not require propeptide cleavage to bind nerve growth factor.</title>
        <authorList>
            <person name="Westergaard U.B."/>
            <person name="Kirkegaard K."/>
            <person name="Soerensen E.S."/>
            <person name="Jacobsen C."/>
            <person name="Nielsen M.S."/>
            <person name="Petersen C.M."/>
            <person name="Madsen P."/>
        </authorList>
    </citation>
    <scope>INTERACTION WITH SORCS3</scope>
</reference>
<reference key="15">
    <citation type="journal article" date="2010" name="J. Biol. Chem.">
        <title>Nerve growth factor inhibits metalloproteinase-disintegrins and blocks ectodomain shedding of platelet glycoprotein VI.</title>
        <authorList>
            <person name="Wijeyewickrema L.C."/>
            <person name="Gardiner E.E."/>
            <person name="Gladigau E.L."/>
            <person name="Berndt M.C."/>
            <person name="Andrews R.K."/>
        </authorList>
    </citation>
    <scope>FUNCTION</scope>
    <scope>INTERACTION WITH ADAM10</scope>
</reference>
<reference evidence="24" key="16">
    <citation type="journal article" date="1999" name="Nature">
        <title>Crystal structure of nerve growth factor in complex with the ligand-binding domain of the TrkA receptor.</title>
        <authorList>
            <person name="Wiesmann C."/>
            <person name="Ultsch M.H."/>
            <person name="Bass S.H."/>
            <person name="de Vos A.M."/>
        </authorList>
    </citation>
    <scope>X-RAY CRYSTALLOGRAPHY (2.20 ANGSTROMS) OF 122-241 IN COMPLEX WITH NTRK1</scope>
    <scope>FUNCTION</scope>
    <scope>SUBUNIT</scope>
    <scope>DISULFIDE BONDS</scope>
</reference>
<reference evidence="23" key="17">
    <citation type="journal article" date="2004" name="Science">
        <title>Structure of nerve growth factor complexed with the shared neurotrophin receptor p75.</title>
        <authorList>
            <person name="He X.L."/>
            <person name="Garcia K.C."/>
        </authorList>
    </citation>
    <scope>X-RAY CRYSTALLOGRAPHY (2.40 ANGSTROMS) OF 122-241 IN COMPLEX WITH NGFR</scope>
    <scope>FUNCTION</scope>
    <scope>SUBUNIT</scope>
    <scope>DISULFIDE BONDS</scope>
</reference>
<reference evidence="25" key="18">
    <citation type="journal article" date="2007" name="Neuron">
        <title>Structural and mechanistic insights into nerve growth factor interactions with the TrkA and p75 receptors.</title>
        <authorList>
            <person name="Wehrman T."/>
            <person name="He X."/>
            <person name="Raab B."/>
            <person name="Dukipatti A."/>
            <person name="Blau H."/>
            <person name="Garcia K.C."/>
        </authorList>
    </citation>
    <scope>X-RAY CRYSTALLOGRAPHY (3.40 ANGSTROMS) OF 122-241 IN COMPLEX WITH NTRK1</scope>
    <scope>SUBUNIT</scope>
    <scope>DISULFIDE BONDS</scope>
</reference>
<reference key="19">
    <citation type="journal article" date="1999" name="Nat. Genet.">
        <title>Characterization of single-nucleotide polymorphisms in coding regions of human genes.</title>
        <authorList>
            <person name="Cargill M."/>
            <person name="Altshuler D."/>
            <person name="Ireland J."/>
            <person name="Sklar P."/>
            <person name="Ardlie K."/>
            <person name="Patil N."/>
            <person name="Shaw N."/>
            <person name="Lane C.R."/>
            <person name="Lim E.P."/>
            <person name="Kalyanaraman N."/>
            <person name="Nemesh J."/>
            <person name="Ziaugra L."/>
            <person name="Friedland L."/>
            <person name="Rolfe A."/>
            <person name="Warrington J."/>
            <person name="Lipshutz R."/>
            <person name="Daley G.Q."/>
            <person name="Lander E.S."/>
        </authorList>
    </citation>
    <scope>VARIANT VAL-35</scope>
</reference>
<reference key="20">
    <citation type="journal article" date="1999" name="Nat. Genet.">
        <authorList>
            <person name="Cargill M."/>
            <person name="Altshuler D."/>
            <person name="Ireland J."/>
            <person name="Sklar P."/>
            <person name="Ardlie K."/>
            <person name="Patil N."/>
            <person name="Shaw N."/>
            <person name="Lane C.R."/>
            <person name="Lim E.P."/>
            <person name="Kalyanaraman N."/>
            <person name="Nemesh J."/>
            <person name="Ziaugra L."/>
            <person name="Friedland L."/>
            <person name="Rolfe A."/>
            <person name="Warrington J."/>
            <person name="Lipshutz R."/>
            <person name="Daley G.Q."/>
            <person name="Lander E.S."/>
        </authorList>
    </citation>
    <scope>ERRATUM OF PUBMED:10391209</scope>
</reference>
<reference key="21">
    <citation type="journal article" date="2004" name="Hum. Mol. Genet.">
        <title>A mutation in the nerve growth factor beta gene (NGFB) causes loss of pain perception.</title>
        <authorList>
            <person name="Einarsdottir E."/>
            <person name="Carlsson A."/>
            <person name="Minde J."/>
            <person name="Toolanen G."/>
            <person name="Svensson O."/>
            <person name="Solders G."/>
            <person name="Holmgren G."/>
            <person name="Holmberg D."/>
            <person name="Holmberg M."/>
        </authorList>
    </citation>
    <scope>VARIANT HSAN5 TRP-221</scope>
    <scope>FUNCTION</scope>
</reference>
<reference key="22">
    <citation type="journal article" date="2011" name="J. Med. Genet.">
        <title>A novel NGF mutation clarifies the molecular mechanism and extends the phenotypic spectrum of the HSAN5 neuropathy.</title>
        <authorList>
            <person name="Carvalho O.P."/>
            <person name="Thornton G.K."/>
            <person name="Hertecant J."/>
            <person name="Houlden H."/>
            <person name="Nicholas A.K."/>
            <person name="Cox J.J."/>
            <person name="Rielly M."/>
            <person name="Al-Gazali L."/>
            <person name="Woods C.G."/>
        </authorList>
    </citation>
    <scope>CHARACTERIZATION OF VARIANT HSAN5 TRP-221</scope>
    <scope>FUNCTION</scope>
    <scope>SUBCELLULAR LOCATION</scope>
</reference>
<reference key="23">
    <citation type="journal article" date="2012" name="J. Neurol.">
        <title>Frequency of mutations in the genes associated with hereditary sensory and autonomic neuropathy in a UK cohort.</title>
        <authorList>
            <person name="Davidson G.L."/>
            <person name="Murphy S.M."/>
            <person name="Polke J.M."/>
            <person name="Laura M."/>
            <person name="Salih M.A."/>
            <person name="Muntoni F."/>
            <person name="Blake J."/>
            <person name="Brandner S."/>
            <person name="Davies N."/>
            <person name="Horvath R."/>
            <person name="Price S."/>
            <person name="Donaghy M."/>
            <person name="Roberts M."/>
            <person name="Foulds N."/>
            <person name="Ramdharry G."/>
            <person name="Soler D."/>
            <person name="Lunn M.P."/>
            <person name="Manji H."/>
            <person name="Davis M.B."/>
            <person name="Houlden H."/>
            <person name="Reilly M.M."/>
        </authorList>
    </citation>
    <scope>VARIANT HSAN5 GLY-GLU-162 INS</scope>
    <scope>VARIANT ASN-187</scope>
</reference>
<evidence type="ECO:0000250" key="1">
    <source>
        <dbReference type="UniProtKB" id="P01139"/>
    </source>
</evidence>
<evidence type="ECO:0000255" key="2"/>
<evidence type="ECO:0000269" key="3">
    <source>
    </source>
</evidence>
<evidence type="ECO:0000269" key="4">
    <source>
    </source>
</evidence>
<evidence type="ECO:0000269" key="5">
    <source>
    </source>
</evidence>
<evidence type="ECO:0000269" key="6">
    <source>
    </source>
</evidence>
<evidence type="ECO:0000269" key="7">
    <source>
    </source>
</evidence>
<evidence type="ECO:0000269" key="8">
    <source>
    </source>
</evidence>
<evidence type="ECO:0000269" key="9">
    <source>
    </source>
</evidence>
<evidence type="ECO:0000269" key="10">
    <source>
    </source>
</evidence>
<evidence type="ECO:0000269" key="11">
    <source>
    </source>
</evidence>
<evidence type="ECO:0000269" key="12">
    <source>
    </source>
</evidence>
<evidence type="ECO:0000269" key="13">
    <source>
    </source>
</evidence>
<evidence type="ECO:0000269" key="14">
    <source>
    </source>
</evidence>
<evidence type="ECO:0000269" key="15">
    <source>
    </source>
</evidence>
<evidence type="ECO:0000269" key="16">
    <source>
    </source>
</evidence>
<evidence type="ECO:0000269" key="17">
    <source ref="10"/>
</evidence>
<evidence type="ECO:0000303" key="18">
    <source>
    </source>
</evidence>
<evidence type="ECO:0000303" key="19">
    <source>
    </source>
</evidence>
<evidence type="ECO:0000305" key="20"/>
<evidence type="ECO:0000305" key="21">
    <source>
    </source>
</evidence>
<evidence type="ECO:0000305" key="22">
    <source>
    </source>
</evidence>
<evidence type="ECO:0007744" key="23">
    <source>
        <dbReference type="PDB" id="1SG1"/>
    </source>
</evidence>
<evidence type="ECO:0007744" key="24">
    <source>
        <dbReference type="PDB" id="1WWW"/>
    </source>
</evidence>
<evidence type="ECO:0007744" key="25">
    <source>
        <dbReference type="PDB" id="2IFG"/>
    </source>
</evidence>
<evidence type="ECO:0007744" key="26">
    <source>
        <dbReference type="PDB" id="4EDW"/>
    </source>
</evidence>
<evidence type="ECO:0007744" key="27">
    <source>
        <dbReference type="PDB" id="4EDX"/>
    </source>
</evidence>
<evidence type="ECO:0007744" key="28">
    <source>
        <dbReference type="PDB" id="4ZBN"/>
    </source>
</evidence>
<evidence type="ECO:0007744" key="29">
    <source>
        <dbReference type="PDB" id="5JZ7"/>
    </source>
</evidence>
<evidence type="ECO:0007829" key="30">
    <source>
        <dbReference type="PDB" id="1SG1"/>
    </source>
</evidence>
<evidence type="ECO:0007829" key="31">
    <source>
        <dbReference type="PDB" id="1WWW"/>
    </source>
</evidence>
<evidence type="ECO:0007829" key="32">
    <source>
        <dbReference type="PDB" id="6YW8"/>
    </source>
</evidence>
<name>NGF_HUMAN</name>
<dbReference type="EMBL" id="V01511">
    <property type="protein sequence ID" value="CAA24755.1"/>
    <property type="molecule type" value="Genomic_DNA"/>
</dbReference>
<dbReference type="EMBL" id="M21062">
    <property type="protein sequence ID" value="AAA59931.1"/>
    <property type="molecule type" value="Genomic_DNA"/>
</dbReference>
<dbReference type="EMBL" id="AF150960">
    <property type="protein sequence ID" value="AAD55975.1"/>
    <property type="molecule type" value="Genomic_DNA"/>
</dbReference>
<dbReference type="EMBL" id="AB037517">
    <property type="protein sequence ID" value="BAA90437.1"/>
    <property type="molecule type" value="Genomic_DNA"/>
</dbReference>
<dbReference type="EMBL" id="AF411526">
    <property type="protein sequence ID" value="AAL05874.1"/>
    <property type="molecule type" value="mRNA"/>
</dbReference>
<dbReference type="EMBL" id="CR541855">
    <property type="protein sequence ID" value="CAG46653.1"/>
    <property type="molecule type" value="mRNA"/>
</dbReference>
<dbReference type="EMBL" id="BT019733">
    <property type="protein sequence ID" value="AAV38538.1"/>
    <property type="molecule type" value="mRNA"/>
</dbReference>
<dbReference type="EMBL" id="AL049825">
    <property type="status" value="NOT_ANNOTATED_CDS"/>
    <property type="molecule type" value="Genomic_DNA"/>
</dbReference>
<dbReference type="EMBL" id="CH471122">
    <property type="protein sequence ID" value="EAW56629.1"/>
    <property type="molecule type" value="Genomic_DNA"/>
</dbReference>
<dbReference type="EMBL" id="BC032517">
    <property type="protein sequence ID" value="AAH32517.2"/>
    <property type="status" value="ALT_INIT"/>
    <property type="molecule type" value="mRNA"/>
</dbReference>
<dbReference type="EMBL" id="BC126148">
    <property type="protein sequence ID" value="AAI26149.1"/>
    <property type="molecule type" value="mRNA"/>
</dbReference>
<dbReference type="EMBL" id="BC126150">
    <property type="protein sequence ID" value="AAI26151.1"/>
    <property type="molecule type" value="mRNA"/>
</dbReference>
<dbReference type="EMBL" id="X52599">
    <property type="protein sequence ID" value="CAA36832.1"/>
    <property type="molecule type" value="mRNA"/>
</dbReference>
<dbReference type="CCDS" id="CCDS882.1"/>
<dbReference type="PIR" id="A01399">
    <property type="entry name" value="NGHUBM"/>
</dbReference>
<dbReference type="RefSeq" id="NP_002497.2">
    <property type="nucleotide sequence ID" value="NM_002506.3"/>
</dbReference>
<dbReference type="RefSeq" id="XP_006710726.1">
    <property type="nucleotide sequence ID" value="XM_006710663.4"/>
</dbReference>
<dbReference type="RefSeq" id="XP_054192765.1">
    <property type="nucleotide sequence ID" value="XM_054336790.1"/>
</dbReference>
<dbReference type="PDB" id="1SG1">
    <property type="method" value="X-ray"/>
    <property type="resolution" value="2.40 A"/>
    <property type="chains" value="A/B=122-241"/>
</dbReference>
<dbReference type="PDB" id="1WWW">
    <property type="method" value="X-ray"/>
    <property type="resolution" value="2.20 A"/>
    <property type="chains" value="V/W=122-241"/>
</dbReference>
<dbReference type="PDB" id="2IFG">
    <property type="method" value="X-ray"/>
    <property type="resolution" value="3.40 A"/>
    <property type="chains" value="E/F=122-241"/>
</dbReference>
<dbReference type="PDB" id="4EDW">
    <property type="method" value="X-ray"/>
    <property type="resolution" value="2.48 A"/>
    <property type="chains" value="V=122-241"/>
</dbReference>
<dbReference type="PDB" id="4EDX">
    <property type="method" value="X-ray"/>
    <property type="resolution" value="2.50 A"/>
    <property type="chains" value="V/W=122-241"/>
</dbReference>
<dbReference type="PDB" id="4ZBN">
    <property type="method" value="X-ray"/>
    <property type="resolution" value="2.45 A"/>
    <property type="chains" value="A/B=122-241"/>
</dbReference>
<dbReference type="PDB" id="5JZ7">
    <property type="method" value="X-ray"/>
    <property type="resolution" value="3.40 A"/>
    <property type="chains" value="A/B/E/F=128-237"/>
</dbReference>
<dbReference type="PDB" id="6YW8">
    <property type="method" value="NMR"/>
    <property type="chains" value="A/B=122-239"/>
</dbReference>
<dbReference type="PDBsum" id="1SG1"/>
<dbReference type="PDBsum" id="1WWW"/>
<dbReference type="PDBsum" id="2IFG"/>
<dbReference type="PDBsum" id="4EDW"/>
<dbReference type="PDBsum" id="4EDX"/>
<dbReference type="PDBsum" id="4ZBN"/>
<dbReference type="PDBsum" id="5JZ7"/>
<dbReference type="PDBsum" id="6YW8"/>
<dbReference type="SASBDB" id="P01138"/>
<dbReference type="SMR" id="P01138"/>
<dbReference type="BioGRID" id="110869">
    <property type="interactions" value="11"/>
</dbReference>
<dbReference type="CORUM" id="P01138"/>
<dbReference type="DIP" id="DIP-5712N"/>
<dbReference type="FunCoup" id="P01138">
    <property type="interactions" value="1231"/>
</dbReference>
<dbReference type="IntAct" id="P01138">
    <property type="interactions" value="7"/>
</dbReference>
<dbReference type="MINT" id="P01138"/>
<dbReference type="STRING" id="9606.ENSP00000358525"/>
<dbReference type="BindingDB" id="P01138"/>
<dbReference type="ChEMBL" id="CHEMBL1649058"/>
<dbReference type="DrugBank" id="DB01407">
    <property type="generic name" value="Clenbuterol"/>
</dbReference>
<dbReference type="DrugBank" id="DB12157">
    <property type="generic name" value="Fasinumab"/>
</dbReference>
<dbReference type="DrugBank" id="DB12843">
    <property type="generic name" value="Oleandrin"/>
</dbReference>
<dbReference type="DrugBank" id="DB09221">
    <property type="generic name" value="Polaprezinc"/>
</dbReference>
<dbReference type="DrugBank" id="DB05892">
    <property type="generic name" value="RI 624"/>
</dbReference>
<dbReference type="GlyCosmos" id="P01138">
    <property type="glycosylation" value="2 sites, No reported glycans"/>
</dbReference>
<dbReference type="GlyGen" id="P01138">
    <property type="glycosylation" value="5 sites, 1 O-linked glycan (3 sites)"/>
</dbReference>
<dbReference type="iPTMnet" id="P01138"/>
<dbReference type="PhosphoSitePlus" id="P01138"/>
<dbReference type="BioMuta" id="NGF"/>
<dbReference type="MassIVE" id="P01138"/>
<dbReference type="PaxDb" id="9606-ENSP00000358525"/>
<dbReference type="PeptideAtlas" id="P01138"/>
<dbReference type="ProteomicsDB" id="51338"/>
<dbReference type="ABCD" id="P01138">
    <property type="antibodies" value="107 sequenced antibodies"/>
</dbReference>
<dbReference type="Antibodypedia" id="20173">
    <property type="antibodies" value="1307 antibodies from 45 providers"/>
</dbReference>
<dbReference type="DNASU" id="4803"/>
<dbReference type="Ensembl" id="ENST00000369512.3">
    <property type="protein sequence ID" value="ENSP00000358525.2"/>
    <property type="gene ID" value="ENSG00000134259.6"/>
</dbReference>
<dbReference type="Ensembl" id="ENST00000675637.2">
    <property type="protein sequence ID" value="ENSP00000502831.1"/>
    <property type="gene ID" value="ENSG00000134259.6"/>
</dbReference>
<dbReference type="Ensembl" id="ENST00000676038.2">
    <property type="protein sequence ID" value="ENSP00000502380.1"/>
    <property type="gene ID" value="ENSG00000134259.6"/>
</dbReference>
<dbReference type="Ensembl" id="ENST00000679806.1">
    <property type="protein sequence ID" value="ENSP00000506492.1"/>
    <property type="gene ID" value="ENSG00000134259.6"/>
</dbReference>
<dbReference type="Ensembl" id="ENST00000680116.1">
    <property type="protein sequence ID" value="ENSP00000505694.1"/>
    <property type="gene ID" value="ENSG00000134259.6"/>
</dbReference>
<dbReference type="Ensembl" id="ENST00000680540.1">
    <property type="protein sequence ID" value="ENSP00000506569.1"/>
    <property type="gene ID" value="ENSG00000134259.6"/>
</dbReference>
<dbReference type="Ensembl" id="ENST00000680752.1">
    <property type="protein sequence ID" value="ENSP00000505558.1"/>
    <property type="gene ID" value="ENSG00000134259.6"/>
</dbReference>
<dbReference type="GeneID" id="4803"/>
<dbReference type="KEGG" id="hsa:4803"/>
<dbReference type="MANE-Select" id="ENST00000369512.3">
    <property type="protein sequence ID" value="ENSP00000358525.2"/>
    <property type="RefSeq nucleotide sequence ID" value="NM_002506.3"/>
    <property type="RefSeq protein sequence ID" value="NP_002497.2"/>
</dbReference>
<dbReference type="UCSC" id="uc001efu.2">
    <property type="organism name" value="human"/>
</dbReference>
<dbReference type="AGR" id="HGNC:7808"/>
<dbReference type="CTD" id="4803"/>
<dbReference type="DisGeNET" id="4803"/>
<dbReference type="GeneCards" id="NGF"/>
<dbReference type="GeneReviews" id="NGF"/>
<dbReference type="HGNC" id="HGNC:7808">
    <property type="gene designation" value="NGF"/>
</dbReference>
<dbReference type="HPA" id="ENSG00000134259">
    <property type="expression patterns" value="Tissue enhanced (heart muscle, ovary)"/>
</dbReference>
<dbReference type="MalaCards" id="NGF"/>
<dbReference type="MIM" id="162030">
    <property type="type" value="gene"/>
</dbReference>
<dbReference type="MIM" id="608654">
    <property type="type" value="phenotype"/>
</dbReference>
<dbReference type="neXtProt" id="NX_P01138"/>
<dbReference type="OpenTargets" id="ENSG00000134259"/>
<dbReference type="Orphanet" id="64752">
    <property type="disease" value="Hereditary sensory and autonomic neuropathy type 5"/>
</dbReference>
<dbReference type="PharmGKB" id="PA162397475"/>
<dbReference type="VEuPathDB" id="HostDB:ENSG00000134259"/>
<dbReference type="eggNOG" id="ENOG502RYPU">
    <property type="taxonomic scope" value="Eukaryota"/>
</dbReference>
<dbReference type="GeneTree" id="ENSGT00390000007725"/>
<dbReference type="HOGENOM" id="CLU_059942_1_1_1"/>
<dbReference type="InParanoid" id="P01138"/>
<dbReference type="OMA" id="MPMLFYT"/>
<dbReference type="OrthoDB" id="6491780at2759"/>
<dbReference type="PAN-GO" id="P01138">
    <property type="GO annotations" value="17 GO annotations based on evolutionary models"/>
</dbReference>
<dbReference type="PhylomeDB" id="P01138"/>
<dbReference type="TreeFam" id="TF106463"/>
<dbReference type="PathwayCommons" id="P01138"/>
<dbReference type="Reactome" id="R-HSA-167021">
    <property type="pathway name" value="PLC-gamma1 signalling"/>
</dbReference>
<dbReference type="Reactome" id="R-HSA-167044">
    <property type="pathway name" value="Signalling to RAS"/>
</dbReference>
<dbReference type="Reactome" id="R-HSA-167060">
    <property type="pathway name" value="NGF processing"/>
</dbReference>
<dbReference type="Reactome" id="R-HSA-170968">
    <property type="pathway name" value="Frs2-mediated activation"/>
</dbReference>
<dbReference type="Reactome" id="R-HSA-170984">
    <property type="pathway name" value="ARMS-mediated activation"/>
</dbReference>
<dbReference type="Reactome" id="R-HSA-177504">
    <property type="pathway name" value="Retrograde neurotrophin signalling"/>
</dbReference>
<dbReference type="Reactome" id="R-HSA-187042">
    <property type="pathway name" value="TRKA activation by NGF"/>
</dbReference>
<dbReference type="Reactome" id="R-HSA-187706">
    <property type="pathway name" value="Signalling to p38 via RIT and RIN"/>
</dbReference>
<dbReference type="Reactome" id="R-HSA-193648">
    <property type="pathway name" value="NRAGE signals death through JNK"/>
</dbReference>
<dbReference type="Reactome" id="R-HSA-193670">
    <property type="pathway name" value="p75NTR negatively regulates cell cycle via SC1"/>
</dbReference>
<dbReference type="Reactome" id="R-HSA-193681">
    <property type="pathway name" value="Ceramide signalling"/>
</dbReference>
<dbReference type="Reactome" id="R-HSA-198203">
    <property type="pathway name" value="PI3K/AKT activation"/>
</dbReference>
<dbReference type="Reactome" id="R-HSA-198745">
    <property type="pathway name" value="Signalling to STAT3"/>
</dbReference>
<dbReference type="Reactome" id="R-HSA-205017">
    <property type="pathway name" value="NFG and proNGF binds to p75NTR"/>
</dbReference>
<dbReference type="Reactome" id="R-HSA-205025">
    <property type="pathway name" value="NADE modulates death signalling"/>
</dbReference>
<dbReference type="Reactome" id="R-HSA-205043">
    <property type="pathway name" value="NRIF signals cell death from the nucleus"/>
</dbReference>
<dbReference type="Reactome" id="R-HSA-209543">
    <property type="pathway name" value="p75NTR recruits signalling complexes"/>
</dbReference>
<dbReference type="Reactome" id="R-HSA-209560">
    <property type="pathway name" value="NF-kB is activated and signals survival"/>
</dbReference>
<dbReference type="Reactome" id="R-HSA-209563">
    <property type="pathway name" value="Axonal growth stimulation"/>
</dbReference>
<dbReference type="SignaLink" id="P01138"/>
<dbReference type="SIGNOR" id="P01138"/>
<dbReference type="BioGRID-ORCS" id="4803">
    <property type="hits" value="13 hits in 1148 CRISPR screens"/>
</dbReference>
<dbReference type="ChiTaRS" id="NGF">
    <property type="organism name" value="human"/>
</dbReference>
<dbReference type="EvolutionaryTrace" id="P01138"/>
<dbReference type="GeneWiki" id="Nerve_growth_factor"/>
<dbReference type="GenomeRNAi" id="4803"/>
<dbReference type="Pharos" id="P01138">
    <property type="development level" value="Tchem"/>
</dbReference>
<dbReference type="PRO" id="PR:P01138"/>
<dbReference type="Proteomes" id="UP000005640">
    <property type="component" value="Chromosome 1"/>
</dbReference>
<dbReference type="RNAct" id="P01138">
    <property type="molecule type" value="protein"/>
</dbReference>
<dbReference type="Bgee" id="ENSG00000134259">
    <property type="expression patterns" value="Expressed in cartilage tissue and 107 other cell types or tissues"/>
</dbReference>
<dbReference type="GO" id="GO:0030424">
    <property type="term" value="C:axon"/>
    <property type="evidence" value="ECO:0000318"/>
    <property type="project" value="GO_Central"/>
</dbReference>
<dbReference type="GO" id="GO:0005829">
    <property type="term" value="C:cytosol"/>
    <property type="evidence" value="ECO:0000304"/>
    <property type="project" value="Reactome"/>
</dbReference>
<dbReference type="GO" id="GO:0030425">
    <property type="term" value="C:dendrite"/>
    <property type="evidence" value="ECO:0000318"/>
    <property type="project" value="GO_Central"/>
</dbReference>
<dbReference type="GO" id="GO:0031904">
    <property type="term" value="C:endosome lumen"/>
    <property type="evidence" value="ECO:0007669"/>
    <property type="project" value="UniProtKB-SubCell"/>
</dbReference>
<dbReference type="GO" id="GO:0005576">
    <property type="term" value="C:extracellular region"/>
    <property type="evidence" value="ECO:0000304"/>
    <property type="project" value="Reactome"/>
</dbReference>
<dbReference type="GO" id="GO:0005615">
    <property type="term" value="C:extracellular space"/>
    <property type="evidence" value="ECO:0000318"/>
    <property type="project" value="GO_Central"/>
</dbReference>
<dbReference type="GO" id="GO:0005796">
    <property type="term" value="C:Golgi lumen"/>
    <property type="evidence" value="ECO:0000304"/>
    <property type="project" value="Reactome"/>
</dbReference>
<dbReference type="GO" id="GO:0008021">
    <property type="term" value="C:synaptic vesicle"/>
    <property type="evidence" value="ECO:0000318"/>
    <property type="project" value="GO_Central"/>
</dbReference>
<dbReference type="GO" id="GO:0008083">
    <property type="term" value="F:growth factor activity"/>
    <property type="evidence" value="ECO:0000318"/>
    <property type="project" value="GO_Central"/>
</dbReference>
<dbReference type="GO" id="GO:0008289">
    <property type="term" value="F:lipid binding"/>
    <property type="evidence" value="ECO:0007669"/>
    <property type="project" value="UniProtKB-KW"/>
</dbReference>
<dbReference type="GO" id="GO:0008191">
    <property type="term" value="F:metalloendopeptidase inhibitor activity"/>
    <property type="evidence" value="ECO:0000314"/>
    <property type="project" value="UniProtKB"/>
</dbReference>
<dbReference type="GO" id="GO:0005163">
    <property type="term" value="F:nerve growth factor receptor binding"/>
    <property type="evidence" value="ECO:0000353"/>
    <property type="project" value="BHF-UCL"/>
</dbReference>
<dbReference type="GO" id="GO:0030297">
    <property type="term" value="F:transmembrane receptor protein tyrosine kinase activator activity"/>
    <property type="evidence" value="ECO:0007669"/>
    <property type="project" value="Ensembl"/>
</dbReference>
<dbReference type="GO" id="GO:0048675">
    <property type="term" value="P:axon extension"/>
    <property type="evidence" value="ECO:0007669"/>
    <property type="project" value="Ensembl"/>
</dbReference>
<dbReference type="GO" id="GO:0007169">
    <property type="term" value="P:cell surface receptor protein tyrosine kinase signaling pathway"/>
    <property type="evidence" value="ECO:0000318"/>
    <property type="project" value="GO_Central"/>
</dbReference>
<dbReference type="GO" id="GO:0007623">
    <property type="term" value="P:circadian rhythm"/>
    <property type="evidence" value="ECO:0007669"/>
    <property type="project" value="Ensembl"/>
</dbReference>
<dbReference type="GO" id="GO:0097192">
    <property type="term" value="P:extrinsic apoptotic signaling pathway in absence of ligand"/>
    <property type="evidence" value="ECO:0007669"/>
    <property type="project" value="Ensembl"/>
</dbReference>
<dbReference type="GO" id="GO:0008625">
    <property type="term" value="P:extrinsic apoptotic signaling pathway via death domain receptors"/>
    <property type="evidence" value="ECO:0000314"/>
    <property type="project" value="BHF-UCL"/>
</dbReference>
<dbReference type="GO" id="GO:0050804">
    <property type="term" value="P:modulation of chemical synaptic transmission"/>
    <property type="evidence" value="ECO:0000318"/>
    <property type="project" value="GO_Central"/>
</dbReference>
<dbReference type="GO" id="GO:0008285">
    <property type="term" value="P:negative regulation of cell population proliferation"/>
    <property type="evidence" value="ECO:0000304"/>
    <property type="project" value="ARUK-UCL"/>
</dbReference>
<dbReference type="GO" id="GO:0043524">
    <property type="term" value="P:negative regulation of neuron apoptotic process"/>
    <property type="evidence" value="ECO:0000318"/>
    <property type="project" value="GO_Central"/>
</dbReference>
<dbReference type="GO" id="GO:0021675">
    <property type="term" value="P:nerve development"/>
    <property type="evidence" value="ECO:0000318"/>
    <property type="project" value="GO_Central"/>
</dbReference>
<dbReference type="GO" id="GO:0038180">
    <property type="term" value="P:nerve growth factor signaling pathway"/>
    <property type="evidence" value="ECO:0000318"/>
    <property type="project" value="GO_Central"/>
</dbReference>
<dbReference type="GO" id="GO:0051402">
    <property type="term" value="P:neuron apoptotic process"/>
    <property type="evidence" value="ECO:0007669"/>
    <property type="project" value="Ensembl"/>
</dbReference>
<dbReference type="GO" id="GO:0048812">
    <property type="term" value="P:neuron projection morphogenesis"/>
    <property type="evidence" value="ECO:0000314"/>
    <property type="project" value="MGI"/>
</dbReference>
<dbReference type="GO" id="GO:0048011">
    <property type="term" value="P:neurotrophin TRK receptor signaling pathway"/>
    <property type="evidence" value="ECO:0007669"/>
    <property type="project" value="Ensembl"/>
</dbReference>
<dbReference type="GO" id="GO:0007422">
    <property type="term" value="P:peripheral nervous system development"/>
    <property type="evidence" value="ECO:0007669"/>
    <property type="project" value="Ensembl"/>
</dbReference>
<dbReference type="GO" id="GO:0045773">
    <property type="term" value="P:positive regulation of axon extension"/>
    <property type="evidence" value="ECO:0007669"/>
    <property type="project" value="Ensembl"/>
</dbReference>
<dbReference type="GO" id="GO:0048672">
    <property type="term" value="P:positive regulation of collateral sprouting"/>
    <property type="evidence" value="ECO:0007669"/>
    <property type="project" value="Ensembl"/>
</dbReference>
<dbReference type="GO" id="GO:0070374">
    <property type="term" value="P:positive regulation of ERK1 and ERK2 cascade"/>
    <property type="evidence" value="ECO:0007669"/>
    <property type="project" value="Ensembl"/>
</dbReference>
<dbReference type="GO" id="GO:0010628">
    <property type="term" value="P:positive regulation of gene expression"/>
    <property type="evidence" value="ECO:0000315"/>
    <property type="project" value="UniProtKB"/>
</dbReference>
<dbReference type="GO" id="GO:0045666">
    <property type="term" value="P:positive regulation of neuron differentiation"/>
    <property type="evidence" value="ECO:0000304"/>
    <property type="project" value="ARUK-UCL"/>
</dbReference>
<dbReference type="GO" id="GO:0014042">
    <property type="term" value="P:positive regulation of neuron maturation"/>
    <property type="evidence" value="ECO:0007669"/>
    <property type="project" value="Ensembl"/>
</dbReference>
<dbReference type="GO" id="GO:0010976">
    <property type="term" value="P:positive regulation of neuron projection development"/>
    <property type="evidence" value="ECO:0007669"/>
    <property type="project" value="Ensembl"/>
</dbReference>
<dbReference type="GO" id="GO:0051897">
    <property type="term" value="P:positive regulation of phosphatidylinositol 3-kinase/protein kinase B signal transduction"/>
    <property type="evidence" value="ECO:0007669"/>
    <property type="project" value="Ensembl"/>
</dbReference>
<dbReference type="GO" id="GO:0031398">
    <property type="term" value="P:positive regulation of protein ubiquitination"/>
    <property type="evidence" value="ECO:0007669"/>
    <property type="project" value="Ensembl"/>
</dbReference>
<dbReference type="GO" id="GO:0046579">
    <property type="term" value="P:positive regulation of Ras protein signal transduction"/>
    <property type="evidence" value="ECO:0000250"/>
    <property type="project" value="ParkinsonsUK-UCL"/>
</dbReference>
<dbReference type="GO" id="GO:0046928">
    <property type="term" value="P:regulation of neurotransmitter secretion"/>
    <property type="evidence" value="ECO:0007669"/>
    <property type="project" value="Ensembl"/>
</dbReference>
<dbReference type="GO" id="GO:0051279">
    <property type="term" value="P:regulation of release of sequestered calcium ion into cytosol"/>
    <property type="evidence" value="ECO:0007669"/>
    <property type="project" value="Ensembl"/>
</dbReference>
<dbReference type="GO" id="GO:0019233">
    <property type="term" value="P:sensory perception of pain"/>
    <property type="evidence" value="ECO:0007669"/>
    <property type="project" value="Ensembl"/>
</dbReference>
<dbReference type="FunFam" id="2.10.90.10:FF:000002">
    <property type="entry name" value="Brain-derived neurotrophic factor"/>
    <property type="match status" value="1"/>
</dbReference>
<dbReference type="Gene3D" id="2.10.90.10">
    <property type="entry name" value="Cystine-knot cytokines"/>
    <property type="match status" value="1"/>
</dbReference>
<dbReference type="InterPro" id="IPR029034">
    <property type="entry name" value="Cystine-knot_cytokine"/>
</dbReference>
<dbReference type="InterPro" id="IPR020408">
    <property type="entry name" value="Nerve_growth_factor-like"/>
</dbReference>
<dbReference type="InterPro" id="IPR002072">
    <property type="entry name" value="Nerve_growth_factor-rel"/>
</dbReference>
<dbReference type="InterPro" id="IPR020425">
    <property type="entry name" value="Nerve_growth_factor_bsu"/>
</dbReference>
<dbReference type="InterPro" id="IPR020437">
    <property type="entry name" value="Nerve_growth_factor_bsu_mml"/>
</dbReference>
<dbReference type="InterPro" id="IPR019846">
    <property type="entry name" value="Nerve_growth_factor_CS"/>
</dbReference>
<dbReference type="PANTHER" id="PTHR11589:SF10">
    <property type="entry name" value="BETA-NERVE GROWTH FACTOR"/>
    <property type="match status" value="1"/>
</dbReference>
<dbReference type="PANTHER" id="PTHR11589">
    <property type="entry name" value="NERVE GROWTH FACTOR NGF -RELATED"/>
    <property type="match status" value="1"/>
</dbReference>
<dbReference type="Pfam" id="PF00243">
    <property type="entry name" value="NGF"/>
    <property type="match status" value="1"/>
</dbReference>
<dbReference type="PIRSF" id="PIRSF001789">
    <property type="entry name" value="NGF"/>
    <property type="match status" value="1"/>
</dbReference>
<dbReference type="PRINTS" id="PR01925">
    <property type="entry name" value="MAMLNGFBETA"/>
</dbReference>
<dbReference type="PRINTS" id="PR00268">
    <property type="entry name" value="NGF"/>
</dbReference>
<dbReference type="PRINTS" id="PR01913">
    <property type="entry name" value="NGFBETA"/>
</dbReference>
<dbReference type="SMART" id="SM00140">
    <property type="entry name" value="NGF"/>
    <property type="match status" value="1"/>
</dbReference>
<dbReference type="SUPFAM" id="SSF57501">
    <property type="entry name" value="Cystine-knot cytokines"/>
    <property type="match status" value="1"/>
</dbReference>
<dbReference type="PROSITE" id="PS00248">
    <property type="entry name" value="NGF_1"/>
    <property type="match status" value="1"/>
</dbReference>
<dbReference type="PROSITE" id="PS50270">
    <property type="entry name" value="NGF_2"/>
    <property type="match status" value="1"/>
</dbReference>
<proteinExistence type="evidence at protein level"/>
<gene>
    <name type="primary">NGF</name>
    <name type="synonym">NGFB</name>
</gene>
<organism>
    <name type="scientific">Homo sapiens</name>
    <name type="common">Human</name>
    <dbReference type="NCBI Taxonomy" id="9606"/>
    <lineage>
        <taxon>Eukaryota</taxon>
        <taxon>Metazoa</taxon>
        <taxon>Chordata</taxon>
        <taxon>Craniata</taxon>
        <taxon>Vertebrata</taxon>
        <taxon>Euteleostomi</taxon>
        <taxon>Mammalia</taxon>
        <taxon>Eutheria</taxon>
        <taxon>Euarchontoglires</taxon>
        <taxon>Primates</taxon>
        <taxon>Haplorrhini</taxon>
        <taxon>Catarrhini</taxon>
        <taxon>Hominidae</taxon>
        <taxon>Homo</taxon>
    </lineage>
</organism>
<comment type="function">
    <text evidence="1 5 11 12 21 22">Nerve growth factor is important for the development and maintenance of the sympathetic and sensory nervous systems (PubMed:14976160, PubMed:20978020). Extracellular ligand for the NTRK1 and NGFR receptors, activates cellular signaling cascades to regulate neuronal proliferation, differentiation and survival (Probable) (PubMed:20978020). The immature NGF precursor (proNGF) functions as a ligand for the heterodimeric receptor formed by SORCS2 and NGFR, and activates cellular signaling cascades that lead to inactivation of RAC1 and/or RAC2, reorganization of the actin cytoskeleton and neuronal growth cone collapse. In contrast to mature NGF, the precursor form (proNGF) promotes neuronal apoptosis (in vitro) (By similarity). Inhibits metalloproteinase-dependent proteolysis of platelet glycoprotein VI (PubMed:20164177). Binds lysophosphatidylinositol and lysophosphatidylserine between the two chains of the homodimer. The lipid-bound form promotes histamine relase from mast cells, contrary to the lipid-free form (By similarity).</text>
</comment>
<comment type="subunit">
    <text evidence="1 4 7 9 10 11">Homodimer (PubMed:10490030, PubMed:15131306, PubMed:17196528). The homodimer interacts with a single NTRK1 chain (PubMed:10490030, PubMed:17196528). The homodimer interacts with a single NGFR chain (PubMed:15131306). The NGF dimer interacts with a single SORCS2 chain (via extracellular domain) (By similarity). The NGF precursor (proNGF) binds to a receptor complex formed by SORT1 and NGFR, which leads to NGF endocytosis. Both mature NGF and the immature NGF precursor (proNGF) interact with SORCS2 and with the heterodimer formed by SORCS2 and NGFR (via extracellular domains) (By similarity). The NGF precursor (proNGF) has much higher affinity for SORCS2 than mature NGF. The NGF precursor (proNGF) has much higher affinity for SORT1 than mature NGF (By similarity). Interacts with ADAM10 in a divalent cation-dependent manner (PubMed:20164177). Interaction with SORCS3 (PubMed:15710408).</text>
</comment>
<comment type="interaction">
    <interactant intactId="EBI-1028250">
        <id>P01138</id>
    </interactant>
    <interactant intactId="EBI-77613">
        <id>P05067</id>
        <label>APP</label>
    </interactant>
    <organismsDiffer>false</organismsDiffer>
    <experiments>9</experiments>
</comment>
<comment type="interaction">
    <interactant intactId="EBI-1028250">
        <id>P01138</id>
    </interactant>
    <interactant intactId="EBI-711977">
        <id>P20042</id>
        <label>EIF2S2</label>
    </interactant>
    <organismsDiffer>false</organismsDiffer>
    <experiments>3</experiments>
</comment>
<comment type="interaction">
    <interactant intactId="EBI-1028250">
        <id>P01138</id>
    </interactant>
    <interactant intactId="EBI-1387782">
        <id>P08138</id>
        <label>NGFR</label>
    </interactant>
    <organismsDiffer>false</organismsDiffer>
    <experiments>2</experiments>
</comment>
<comment type="interaction">
    <interactant intactId="EBI-1028250">
        <id>P01138</id>
    </interactant>
    <interactant intactId="EBI-1028226">
        <id>P04629</id>
        <label>NTRK1</label>
    </interactant>
    <organismsDiffer>false</organismsDiffer>
    <experiments>3</experiments>
</comment>
<comment type="interaction">
    <interactant intactId="EBI-1028250">
        <id>P01138</id>
    </interactant>
    <interactant intactId="EBI-1057058">
        <id>Q99523</id>
        <label>SORT1</label>
    </interactant>
    <organismsDiffer>false</organismsDiffer>
    <experiments>5</experiments>
</comment>
<comment type="interaction">
    <interactant intactId="EBI-1028250">
        <id>P01138</id>
    </interactant>
    <interactant intactId="EBI-1038810">
        <id>P07174</id>
        <label>Ngfr</label>
    </interactant>
    <organismsDiffer>true</organismsDiffer>
    <experiments>3</experiments>
</comment>
<comment type="interaction">
    <interactant intactId="EBI-9345310">
        <id>PRO_0000019599</id>
    </interactant>
    <interactant intactId="EBI-1057058">
        <id>Q99523</id>
        <label>SORT1</label>
    </interactant>
    <organismsDiffer>false</organismsDiffer>
    <experiments>2</experiments>
</comment>
<comment type="interaction">
    <interactant intactId="EBI-9249861">
        <id>PRO_0000019600</id>
    </interactant>
    <interactant intactId="EBI-1387782">
        <id>P08138</id>
        <label>NGFR</label>
    </interactant>
    <organismsDiffer>false</organismsDiffer>
    <experiments>2</experiments>
</comment>
<comment type="interaction">
    <interactant intactId="EBI-9249861">
        <id>PRO_0000019600</id>
    </interactant>
    <interactant intactId="EBI-1028226">
        <id>P04629</id>
        <label>NTRK1</label>
    </interactant>
    <organismsDiffer>false</organismsDiffer>
    <experiments>2</experiments>
</comment>
<comment type="subcellular location">
    <subcellularLocation>
        <location evidence="12">Secreted</location>
    </subcellularLocation>
    <subcellularLocation>
        <location evidence="1">Endosome lumen</location>
    </subcellularLocation>
    <text evidence="1">ProNGF is endocytosed after binding to the cell surface receptor formed by SORT1 and NGFR.</text>
</comment>
<comment type="disease" evidence="5 12 13">
    <disease id="DI-00549">
        <name>Neuropathy, hereditary sensory and autonomic, 5</name>
        <acronym>HSAN5</acronym>
        <description>A form of hereditary sensory and autonomic neuropathy, a genetically and clinically heterogeneous group of disorders characterized by degeneration of dorsal root and autonomic ganglion cells, and by sensory and/or autonomic abnormalities. HSAN5 patients manifest loss of pain perception and impaired temperature sensitivity, ulcers, and in some cases self-mutilation. The autonomic involvement is variable.</description>
        <dbReference type="MIM" id="608654"/>
    </disease>
    <text>The disease is caused by variants affecting the gene represented in this entry.</text>
</comment>
<comment type="similarity">
    <text evidence="20">Belongs to the NGF-beta family.</text>
</comment>
<comment type="sequence caution" evidence="20">
    <conflict type="erroneous initiation">
        <sequence resource="EMBL-CDS" id="AAH32517"/>
    </conflict>
    <text>Extended N-terminus.</text>
</comment>
<comment type="online information" name="Wikipedia">
    <link uri="https://en.wikipedia.org/wiki/Nerve_growth_factor"/>
    <text>Nerve growth factor entry</text>
</comment>
<accession>P01138</accession>
<accession>A1A4E5</accession>
<accession>Q6FHA0</accession>
<accession>Q96P60</accession>
<accession>Q9P2Q8</accession>
<accession>Q9UKL8</accession>
<keyword id="KW-0002">3D-structure</keyword>
<keyword id="KW-0165">Cleavage on pair of basic residues</keyword>
<keyword id="KW-0225">Disease variant</keyword>
<keyword id="KW-1015">Disulfide bond</keyword>
<keyword id="KW-0967">Endosome</keyword>
<keyword id="KW-0325">Glycoprotein</keyword>
<keyword id="KW-0339">Growth factor</keyword>
<keyword id="KW-0446">Lipid-binding</keyword>
<keyword id="KW-0481">Metalloenzyme inhibitor</keyword>
<keyword id="KW-0483">Metalloprotease inhibitor</keyword>
<keyword id="KW-0523">Neurodegeneration</keyword>
<keyword id="KW-0622">Neuropathy</keyword>
<keyword id="KW-0646">Protease inhibitor</keyword>
<keyword id="KW-1267">Proteomics identification</keyword>
<keyword id="KW-1185">Reference proteome</keyword>
<keyword id="KW-0964">Secreted</keyword>
<keyword id="KW-0732">Signal</keyword>
<protein>
    <recommendedName>
        <fullName evidence="19">Beta-nerve growth factor</fullName>
        <shortName evidence="18">Beta-NGF</shortName>
    </recommendedName>
</protein>
<feature type="signal peptide" evidence="2">
    <location>
        <begin position="1"/>
        <end position="18"/>
    </location>
</feature>
<feature type="propeptide" id="PRO_0000019599">
    <location>
        <begin position="19"/>
        <end position="121"/>
    </location>
</feature>
<feature type="chain" id="PRO_0000019600" description="Beta-nerve growth factor">
    <location>
        <begin position="122"/>
        <end position="241"/>
    </location>
</feature>
<feature type="binding site" description="in other chain" evidence="1">
    <location>
        <position position="173"/>
    </location>
    <ligand>
        <name>a 1-acyl-sn-glycero-3-phospho-(1D-myo-inositol)</name>
        <dbReference type="ChEBI" id="CHEBI:64771"/>
        <note>ligand shared between dimeric partners</note>
    </ligand>
</feature>
<feature type="binding site" evidence="1">
    <location>
        <position position="209"/>
    </location>
    <ligand>
        <name>a 1-acyl-sn-glycero-3-phospho-(1D-myo-inositol)</name>
        <dbReference type="ChEBI" id="CHEBI:64771"/>
        <note>ligand shared between dimeric partners</note>
    </ligand>
</feature>
<feature type="binding site" evidence="1">
    <location>
        <position position="209"/>
    </location>
    <ligand>
        <name>a 1-acyl-sn-glycero-3-phospho-L-serine</name>
        <dbReference type="ChEBI" id="CHEBI:64379"/>
        <note>ligand shared between dimeric partners</note>
    </ligand>
</feature>
<feature type="glycosylation site" description="N-linked (GlcNAc...) asparagine" evidence="2">
    <location>
        <position position="69"/>
    </location>
</feature>
<feature type="glycosylation site" description="N-linked (GlcNAc...) asparagine" evidence="2">
    <location>
        <position position="114"/>
    </location>
</feature>
<feature type="disulfide bond" evidence="4 23 24 25 26 27 28 29">
    <location>
        <begin position="136"/>
        <end position="201"/>
    </location>
</feature>
<feature type="disulfide bond" evidence="4 23 24 25 26 27 28 29">
    <location>
        <begin position="179"/>
        <end position="229"/>
    </location>
</feature>
<feature type="disulfide bond" evidence="4 23 24 25 26 27 28 29">
    <location>
        <begin position="189"/>
        <end position="231"/>
    </location>
</feature>
<feature type="sequence variant" id="VAR_013783" description="In dbSNP:rs6330." evidence="3 6 8 14 15 16 17">
    <original>A</original>
    <variation>V</variation>
    <location>
        <position position="35"/>
    </location>
</feature>
<feature type="sequence variant" id="VAR_025553" description="In dbSNP:rs11466110.">
    <original>V</original>
    <variation>M</variation>
    <location>
        <position position="72"/>
    </location>
</feature>
<feature type="sequence variant" id="VAR_025554" description="In dbSNP:rs11466111.">
    <original>R</original>
    <variation>Q</variation>
    <location>
        <position position="80"/>
    </location>
</feature>
<feature type="sequence variant" id="VAR_068478" description="In HSAN5; uncertain significance." evidence="13">
    <original>E</original>
    <variation>EGE</variation>
    <location>
        <position position="162"/>
    </location>
</feature>
<feature type="sequence variant" id="VAR_068479" description="Found in a patient with congenital insensitivity to pain; uncertain significance." evidence="13">
    <original>S</original>
    <variation>N</variation>
    <location>
        <position position="187"/>
    </location>
</feature>
<feature type="sequence variant" id="VAR_030659" description="In HSAN5; impaired processing of the precursor to mature NGF; nearly abolishes secretion; loss of function in stimulating cell differentiation; loss of the ability to activate the NTRK1 receptor; dbSNP:rs11466112." evidence="5 12">
    <original>R</original>
    <variation>W</variation>
    <location>
        <position position="221"/>
    </location>
</feature>
<feature type="sequence conflict" description="In Ref. 6; AAL05874." evidence="20" ref="6">
    <original>N</original>
    <variation>S</variation>
    <location>
        <position position="164"/>
    </location>
</feature>
<feature type="sequence conflict" description="In Ref. 6; AAL05874." evidence="20" ref="6">
    <original>V</original>
    <variation>M</variation>
    <location>
        <position position="230"/>
    </location>
</feature>
<feature type="helix" evidence="31">
    <location>
        <begin position="127"/>
        <end position="130"/>
    </location>
</feature>
<feature type="strand" evidence="31">
    <location>
        <begin position="133"/>
        <end position="136"/>
    </location>
</feature>
<feature type="strand" evidence="31">
    <location>
        <begin position="138"/>
        <end position="143"/>
    </location>
</feature>
<feature type="strand" evidence="31">
    <location>
        <begin position="148"/>
        <end position="151"/>
    </location>
</feature>
<feature type="strand" evidence="31">
    <location>
        <begin position="156"/>
        <end position="159"/>
    </location>
</feature>
<feature type="strand" evidence="31">
    <location>
        <begin position="161"/>
        <end position="171"/>
    </location>
</feature>
<feature type="strand" evidence="31">
    <location>
        <begin position="174"/>
        <end position="179"/>
    </location>
</feature>
<feature type="turn" evidence="32">
    <location>
        <begin position="183"/>
        <end position="187"/>
    </location>
</feature>
<feature type="strand" evidence="30">
    <location>
        <begin position="190"/>
        <end position="192"/>
    </location>
</feature>
<feature type="turn" evidence="31">
    <location>
        <begin position="194"/>
        <end position="196"/>
    </location>
</feature>
<feature type="strand" evidence="31">
    <location>
        <begin position="197"/>
        <end position="213"/>
    </location>
</feature>
<feature type="strand" evidence="31">
    <location>
        <begin position="215"/>
        <end position="235"/>
    </location>
</feature>
<sequence length="241" mass="26959">MSMLFYTLITAFLIGIQAEPHSESNVPAGHTIPQAHWTKLQHSLDTALRRARSAPAAAIAARVAGQTRNITVDPRLFKKRRLRSPRVLFSTQPPREAADTQDLDFEVGGAAPFNRTHRSKRSSSHPIFHRGEFSVCDSVSVWVGDKTTATDIKGKEVMVLGEVNINNSVFKQYFFETKCRDPNPVDSGCRGIDSKHWNSYCTTTHTFVKALTMDGKQAAWRFIRIDTACVCVLSRKAVRRA</sequence>